<dbReference type="EC" id="5.4.99.25" evidence="1"/>
<dbReference type="EMBL" id="CP000446">
    <property type="protein sequence ID" value="ABI38108.1"/>
    <property type="molecule type" value="Genomic_DNA"/>
</dbReference>
<dbReference type="RefSeq" id="WP_011621819.1">
    <property type="nucleotide sequence ID" value="NC_008321.1"/>
</dbReference>
<dbReference type="SMR" id="Q0HLF9"/>
<dbReference type="KEGG" id="she:Shewmr4_1028"/>
<dbReference type="HOGENOM" id="CLU_032087_0_3_6"/>
<dbReference type="GO" id="GO:0003723">
    <property type="term" value="F:RNA binding"/>
    <property type="evidence" value="ECO:0007669"/>
    <property type="project" value="InterPro"/>
</dbReference>
<dbReference type="GO" id="GO:0160148">
    <property type="term" value="F:tRNA pseudouridine(55) synthase activity"/>
    <property type="evidence" value="ECO:0007669"/>
    <property type="project" value="UniProtKB-EC"/>
</dbReference>
<dbReference type="GO" id="GO:1990481">
    <property type="term" value="P:mRNA pseudouridine synthesis"/>
    <property type="evidence" value="ECO:0007669"/>
    <property type="project" value="TreeGrafter"/>
</dbReference>
<dbReference type="GO" id="GO:0031119">
    <property type="term" value="P:tRNA pseudouridine synthesis"/>
    <property type="evidence" value="ECO:0007669"/>
    <property type="project" value="UniProtKB-UniRule"/>
</dbReference>
<dbReference type="CDD" id="cd02573">
    <property type="entry name" value="PseudoU_synth_EcTruB"/>
    <property type="match status" value="1"/>
</dbReference>
<dbReference type="CDD" id="cd21152">
    <property type="entry name" value="PUA_TruB_bacterial"/>
    <property type="match status" value="1"/>
</dbReference>
<dbReference type="FunFam" id="2.30.130.10:FF:000004">
    <property type="entry name" value="tRNA pseudouridine synthase B"/>
    <property type="match status" value="1"/>
</dbReference>
<dbReference type="FunFam" id="3.30.2350.10:FF:000003">
    <property type="entry name" value="tRNA pseudouridine synthase B"/>
    <property type="match status" value="1"/>
</dbReference>
<dbReference type="Gene3D" id="3.30.2350.10">
    <property type="entry name" value="Pseudouridine synthase"/>
    <property type="match status" value="1"/>
</dbReference>
<dbReference type="Gene3D" id="2.30.130.10">
    <property type="entry name" value="PUA domain"/>
    <property type="match status" value="1"/>
</dbReference>
<dbReference type="HAMAP" id="MF_01080">
    <property type="entry name" value="TruB_bact"/>
    <property type="match status" value="1"/>
</dbReference>
<dbReference type="InterPro" id="IPR020103">
    <property type="entry name" value="PsdUridine_synth_cat_dom_sf"/>
</dbReference>
<dbReference type="InterPro" id="IPR002501">
    <property type="entry name" value="PsdUridine_synth_N"/>
</dbReference>
<dbReference type="InterPro" id="IPR015947">
    <property type="entry name" value="PUA-like_sf"/>
</dbReference>
<dbReference type="InterPro" id="IPR036974">
    <property type="entry name" value="PUA_sf"/>
</dbReference>
<dbReference type="InterPro" id="IPR014780">
    <property type="entry name" value="tRNA_psdUridine_synth_TruB"/>
</dbReference>
<dbReference type="InterPro" id="IPR015240">
    <property type="entry name" value="tRNA_sdUridine_synth_fam1_C"/>
</dbReference>
<dbReference type="InterPro" id="IPR032819">
    <property type="entry name" value="TruB_C"/>
</dbReference>
<dbReference type="NCBIfam" id="TIGR00431">
    <property type="entry name" value="TruB"/>
    <property type="match status" value="1"/>
</dbReference>
<dbReference type="PANTHER" id="PTHR13767:SF2">
    <property type="entry name" value="PSEUDOURIDYLATE SYNTHASE TRUB1"/>
    <property type="match status" value="1"/>
</dbReference>
<dbReference type="PANTHER" id="PTHR13767">
    <property type="entry name" value="TRNA-PSEUDOURIDINE SYNTHASE"/>
    <property type="match status" value="1"/>
</dbReference>
<dbReference type="Pfam" id="PF09157">
    <property type="entry name" value="TruB-C_2"/>
    <property type="match status" value="1"/>
</dbReference>
<dbReference type="Pfam" id="PF16198">
    <property type="entry name" value="TruB_C_2"/>
    <property type="match status" value="1"/>
</dbReference>
<dbReference type="Pfam" id="PF01509">
    <property type="entry name" value="TruB_N"/>
    <property type="match status" value="1"/>
</dbReference>
<dbReference type="SUPFAM" id="SSF55120">
    <property type="entry name" value="Pseudouridine synthase"/>
    <property type="match status" value="1"/>
</dbReference>
<dbReference type="SUPFAM" id="SSF88697">
    <property type="entry name" value="PUA domain-like"/>
    <property type="match status" value="1"/>
</dbReference>
<sequence>MARRSKGRFIDGIVLLDKATGMSSNFALQRVKRFFNANKAGHTGALDPLATGMLPICLGEATKFSQHLLDSDKRYLVTAKLGQRTDTSDSDGEVVQTRPIEFTEAQLMSALEHFRGDTLQVPSMYSALKYQGQPLYKYAREGIEVPREARPITVFELNFISLEGDELTLDIHCSKGTYIRTIIDDLGEMLGCGAHVIMLRRTQVAHYPYDKMVTLEQLEALVAKAQEEQLDPSSLLDSLLLPMDTAVADFPEVNVPDASAAYLMQGQAVRVSGLVADKLVRITLGTERRFVGIGEMNEDGLLAPKRLVVIHDQAKAS</sequence>
<gene>
    <name evidence="1" type="primary">truB</name>
    <name type="ordered locus">Shewmr4_1028</name>
</gene>
<organism>
    <name type="scientific">Shewanella sp. (strain MR-4)</name>
    <dbReference type="NCBI Taxonomy" id="60480"/>
    <lineage>
        <taxon>Bacteria</taxon>
        <taxon>Pseudomonadati</taxon>
        <taxon>Pseudomonadota</taxon>
        <taxon>Gammaproteobacteria</taxon>
        <taxon>Alteromonadales</taxon>
        <taxon>Shewanellaceae</taxon>
        <taxon>Shewanella</taxon>
    </lineage>
</organism>
<reference key="1">
    <citation type="submission" date="2006-08" db="EMBL/GenBank/DDBJ databases">
        <title>Complete sequence of Shewanella sp. MR-4.</title>
        <authorList>
            <consortium name="US DOE Joint Genome Institute"/>
            <person name="Copeland A."/>
            <person name="Lucas S."/>
            <person name="Lapidus A."/>
            <person name="Barry K."/>
            <person name="Detter J.C."/>
            <person name="Glavina del Rio T."/>
            <person name="Hammon N."/>
            <person name="Israni S."/>
            <person name="Dalin E."/>
            <person name="Tice H."/>
            <person name="Pitluck S."/>
            <person name="Kiss H."/>
            <person name="Brettin T."/>
            <person name="Bruce D."/>
            <person name="Han C."/>
            <person name="Tapia R."/>
            <person name="Gilna P."/>
            <person name="Schmutz J."/>
            <person name="Larimer F."/>
            <person name="Land M."/>
            <person name="Hauser L."/>
            <person name="Kyrpides N."/>
            <person name="Mikhailova N."/>
            <person name="Nealson K."/>
            <person name="Konstantinidis K."/>
            <person name="Klappenbach J."/>
            <person name="Tiedje J."/>
            <person name="Richardson P."/>
        </authorList>
    </citation>
    <scope>NUCLEOTIDE SEQUENCE [LARGE SCALE GENOMIC DNA]</scope>
    <source>
        <strain>MR-4</strain>
    </source>
</reference>
<keyword id="KW-0413">Isomerase</keyword>
<keyword id="KW-0819">tRNA processing</keyword>
<evidence type="ECO:0000255" key="1">
    <source>
        <dbReference type="HAMAP-Rule" id="MF_01080"/>
    </source>
</evidence>
<protein>
    <recommendedName>
        <fullName evidence="1">tRNA pseudouridine synthase B</fullName>
        <ecNumber evidence="1">5.4.99.25</ecNumber>
    </recommendedName>
    <alternativeName>
        <fullName evidence="1">tRNA pseudouridine(55) synthase</fullName>
        <shortName evidence="1">Psi55 synthase</shortName>
    </alternativeName>
    <alternativeName>
        <fullName evidence="1">tRNA pseudouridylate synthase</fullName>
    </alternativeName>
    <alternativeName>
        <fullName evidence="1">tRNA-uridine isomerase</fullName>
    </alternativeName>
</protein>
<name>TRUB_SHESM</name>
<proteinExistence type="inferred from homology"/>
<comment type="function">
    <text evidence="1">Responsible for synthesis of pseudouridine from uracil-55 in the psi GC loop of transfer RNAs.</text>
</comment>
<comment type="catalytic activity">
    <reaction evidence="1">
        <text>uridine(55) in tRNA = pseudouridine(55) in tRNA</text>
        <dbReference type="Rhea" id="RHEA:42532"/>
        <dbReference type="Rhea" id="RHEA-COMP:10101"/>
        <dbReference type="Rhea" id="RHEA-COMP:10102"/>
        <dbReference type="ChEBI" id="CHEBI:65314"/>
        <dbReference type="ChEBI" id="CHEBI:65315"/>
        <dbReference type="EC" id="5.4.99.25"/>
    </reaction>
</comment>
<comment type="similarity">
    <text evidence="1">Belongs to the pseudouridine synthase TruB family. Type 1 subfamily.</text>
</comment>
<accession>Q0HLF9</accession>
<feature type="chain" id="PRO_1000084680" description="tRNA pseudouridine synthase B">
    <location>
        <begin position="1"/>
        <end position="317"/>
    </location>
</feature>
<feature type="active site" description="Nucleophile" evidence="1">
    <location>
        <position position="47"/>
    </location>
</feature>